<organism>
    <name type="scientific">Mycoplasma mycoides subsp. mycoides SC (strain CCUG 32753 / NCTC 10114 / PG1)</name>
    <dbReference type="NCBI Taxonomy" id="272632"/>
    <lineage>
        <taxon>Bacteria</taxon>
        <taxon>Bacillati</taxon>
        <taxon>Mycoplasmatota</taxon>
        <taxon>Mollicutes</taxon>
        <taxon>Mycoplasmataceae</taxon>
        <taxon>Mycoplasma</taxon>
    </lineage>
</organism>
<feature type="chain" id="PRO_0000171356" description="tRNA (guanine-N(7)-)-methyltransferase">
    <location>
        <begin position="1"/>
        <end position="221"/>
    </location>
</feature>
<feature type="active site" evidence="1">
    <location>
        <position position="123"/>
    </location>
</feature>
<feature type="binding site" evidence="2">
    <location>
        <position position="43"/>
    </location>
    <ligand>
        <name>S-adenosyl-L-methionine</name>
        <dbReference type="ChEBI" id="CHEBI:59789"/>
    </ligand>
</feature>
<feature type="binding site" evidence="2">
    <location>
        <position position="68"/>
    </location>
    <ligand>
        <name>S-adenosyl-L-methionine</name>
        <dbReference type="ChEBI" id="CHEBI:59789"/>
    </ligand>
</feature>
<feature type="binding site" evidence="2">
    <location>
        <position position="123"/>
    </location>
    <ligand>
        <name>S-adenosyl-L-methionine</name>
        <dbReference type="ChEBI" id="CHEBI:59789"/>
    </ligand>
</feature>
<feature type="binding site" evidence="2">
    <location>
        <position position="127"/>
    </location>
    <ligand>
        <name>substrate</name>
    </ligand>
</feature>
<feature type="binding site" evidence="2">
    <location>
        <position position="159"/>
    </location>
    <ligand>
        <name>substrate</name>
    </ligand>
</feature>
<feature type="binding site" evidence="2">
    <location>
        <begin position="199"/>
        <end position="202"/>
    </location>
    <ligand>
        <name>substrate</name>
    </ligand>
</feature>
<sequence length="221" mass="26250">MRLRKKNWTDDFLNQHSFYLINYNNKKIDLKQIFLNNNPTCLEIGSGKGQFITTLALKNLNTNYIGMEKSSTITGVALKKSLKEFENQLKDMTNLKYFNNFAEDLSQMFSSDSFNKIYLNFSDPWPKTRHYKKRLTYVKFLDIYSDILIKNGYLEFKTDNDSLYNFTIEQLNLTNKWEIVINATDLYNNTEFLKDNIPTEYETKFHLANKNIYKIVIKNLK</sequence>
<name>TRMB_MYCMS</name>
<comment type="function">
    <text evidence="2">Catalyzes the formation of N(7)-methylguanine at position 46 (m7G46) in tRNA.</text>
</comment>
<comment type="catalytic activity">
    <reaction evidence="2">
        <text>guanosine(46) in tRNA + S-adenosyl-L-methionine = N(7)-methylguanosine(46) in tRNA + S-adenosyl-L-homocysteine</text>
        <dbReference type="Rhea" id="RHEA:42708"/>
        <dbReference type="Rhea" id="RHEA-COMP:10188"/>
        <dbReference type="Rhea" id="RHEA-COMP:10189"/>
        <dbReference type="ChEBI" id="CHEBI:57856"/>
        <dbReference type="ChEBI" id="CHEBI:59789"/>
        <dbReference type="ChEBI" id="CHEBI:74269"/>
        <dbReference type="ChEBI" id="CHEBI:74480"/>
        <dbReference type="EC" id="2.1.1.33"/>
    </reaction>
</comment>
<comment type="pathway">
    <text evidence="2">tRNA modification; N(7)-methylguanine-tRNA biosynthesis.</text>
</comment>
<comment type="similarity">
    <text evidence="2">Belongs to the class I-like SAM-binding methyltransferase superfamily. TrmB family.</text>
</comment>
<proteinExistence type="inferred from homology"/>
<accession>Q6MU75</accession>
<evidence type="ECO:0000250" key="1"/>
<evidence type="ECO:0000255" key="2">
    <source>
        <dbReference type="HAMAP-Rule" id="MF_01057"/>
    </source>
</evidence>
<reference key="1">
    <citation type="journal article" date="2004" name="Genome Res.">
        <title>The genome sequence of Mycoplasma mycoides subsp. mycoides SC type strain PG1T, the causative agent of contagious bovine pleuropneumonia (CBPP).</title>
        <authorList>
            <person name="Westberg J."/>
            <person name="Persson A."/>
            <person name="Holmberg A."/>
            <person name="Goesmann A."/>
            <person name="Lundeberg J."/>
            <person name="Johansson K.-E."/>
            <person name="Pettersson B."/>
            <person name="Uhlen M."/>
        </authorList>
    </citation>
    <scope>NUCLEOTIDE SEQUENCE [LARGE SCALE GENOMIC DNA]</scope>
    <source>
        <strain>CCUG 32753 / NCTC 10114 / PG1</strain>
    </source>
</reference>
<gene>
    <name evidence="2" type="primary">trmB</name>
    <name type="ordered locus">MSC_0166</name>
</gene>
<keyword id="KW-0489">Methyltransferase</keyword>
<keyword id="KW-1185">Reference proteome</keyword>
<keyword id="KW-0949">S-adenosyl-L-methionine</keyword>
<keyword id="KW-0808">Transferase</keyword>
<keyword id="KW-0819">tRNA processing</keyword>
<dbReference type="EC" id="2.1.1.33" evidence="2"/>
<dbReference type="EMBL" id="BX293980">
    <property type="protein sequence ID" value="CAE76811.1"/>
    <property type="molecule type" value="Genomic_DNA"/>
</dbReference>
<dbReference type="RefSeq" id="NP_975169.1">
    <property type="nucleotide sequence ID" value="NC_005364.2"/>
</dbReference>
<dbReference type="RefSeq" id="WP_011166368.1">
    <property type="nucleotide sequence ID" value="NC_005364.2"/>
</dbReference>
<dbReference type="SMR" id="Q6MU75"/>
<dbReference type="STRING" id="272632.MSC_0166"/>
<dbReference type="KEGG" id="mmy:MSC_0166"/>
<dbReference type="PATRIC" id="fig|272632.4.peg.176"/>
<dbReference type="eggNOG" id="COG0220">
    <property type="taxonomic scope" value="Bacteria"/>
</dbReference>
<dbReference type="HOGENOM" id="CLU_050910_2_1_14"/>
<dbReference type="UniPathway" id="UPA00989"/>
<dbReference type="Proteomes" id="UP000001016">
    <property type="component" value="Chromosome"/>
</dbReference>
<dbReference type="GO" id="GO:0043527">
    <property type="term" value="C:tRNA methyltransferase complex"/>
    <property type="evidence" value="ECO:0007669"/>
    <property type="project" value="TreeGrafter"/>
</dbReference>
<dbReference type="GO" id="GO:0008176">
    <property type="term" value="F:tRNA (guanine(46)-N7)-methyltransferase activity"/>
    <property type="evidence" value="ECO:0007669"/>
    <property type="project" value="UniProtKB-UniRule"/>
</dbReference>
<dbReference type="CDD" id="cd02440">
    <property type="entry name" value="AdoMet_MTases"/>
    <property type="match status" value="1"/>
</dbReference>
<dbReference type="Gene3D" id="3.40.50.150">
    <property type="entry name" value="Vaccinia Virus protein VP39"/>
    <property type="match status" value="1"/>
</dbReference>
<dbReference type="HAMAP" id="MF_01057">
    <property type="entry name" value="tRNA_methyltr_TrmB"/>
    <property type="match status" value="1"/>
</dbReference>
<dbReference type="InterPro" id="IPR029063">
    <property type="entry name" value="SAM-dependent_MTases_sf"/>
</dbReference>
<dbReference type="InterPro" id="IPR003358">
    <property type="entry name" value="tRNA_(Gua-N-7)_MeTrfase_Trmb"/>
</dbReference>
<dbReference type="InterPro" id="IPR055361">
    <property type="entry name" value="tRNA_methyltr_TrmB_bact"/>
</dbReference>
<dbReference type="NCBIfam" id="NF001080">
    <property type="entry name" value="PRK00121.2-2"/>
    <property type="match status" value="1"/>
</dbReference>
<dbReference type="NCBIfam" id="TIGR00091">
    <property type="entry name" value="tRNA (guanosine(46)-N7)-methyltransferase TrmB"/>
    <property type="match status" value="1"/>
</dbReference>
<dbReference type="PANTHER" id="PTHR23417">
    <property type="entry name" value="3-DEOXY-D-MANNO-OCTULOSONIC-ACID TRANSFERASE/TRNA GUANINE-N 7 - -METHYLTRANSFERASE"/>
    <property type="match status" value="1"/>
</dbReference>
<dbReference type="PANTHER" id="PTHR23417:SF14">
    <property type="entry name" value="PENTACOTRIPEPTIDE-REPEAT REGION OF PRORP DOMAIN-CONTAINING PROTEIN"/>
    <property type="match status" value="1"/>
</dbReference>
<dbReference type="Pfam" id="PF02390">
    <property type="entry name" value="Methyltransf_4"/>
    <property type="match status" value="1"/>
</dbReference>
<dbReference type="SUPFAM" id="SSF53335">
    <property type="entry name" value="S-adenosyl-L-methionine-dependent methyltransferases"/>
    <property type="match status" value="1"/>
</dbReference>
<dbReference type="PROSITE" id="PS51625">
    <property type="entry name" value="SAM_MT_TRMB"/>
    <property type="match status" value="1"/>
</dbReference>
<protein>
    <recommendedName>
        <fullName evidence="2">tRNA (guanine-N(7)-)-methyltransferase</fullName>
        <ecNumber evidence="2">2.1.1.33</ecNumber>
    </recommendedName>
    <alternativeName>
        <fullName evidence="2">tRNA (guanine(46)-N(7))-methyltransferase</fullName>
    </alternativeName>
    <alternativeName>
        <fullName evidence="2">tRNA(m7G46)-methyltransferase</fullName>
    </alternativeName>
</protein>